<organism>
    <name type="scientific">Pongo abelii</name>
    <name type="common">Sumatran orangutan</name>
    <name type="synonym">Pongo pygmaeus abelii</name>
    <dbReference type="NCBI Taxonomy" id="9601"/>
    <lineage>
        <taxon>Eukaryota</taxon>
        <taxon>Metazoa</taxon>
        <taxon>Chordata</taxon>
        <taxon>Craniata</taxon>
        <taxon>Vertebrata</taxon>
        <taxon>Euteleostomi</taxon>
        <taxon>Mammalia</taxon>
        <taxon>Eutheria</taxon>
        <taxon>Euarchontoglires</taxon>
        <taxon>Primates</taxon>
        <taxon>Haplorrhini</taxon>
        <taxon>Catarrhini</taxon>
        <taxon>Hominidae</taxon>
        <taxon>Pongo</taxon>
    </lineage>
</organism>
<keyword id="KW-0025">Alternative splicing</keyword>
<keyword id="KW-0965">Cell junction</keyword>
<keyword id="KW-1003">Cell membrane</keyword>
<keyword id="KW-0963">Cytoplasm</keyword>
<keyword id="KW-1015">Disulfide bond</keyword>
<keyword id="KW-0256">Endoplasmic reticulum</keyword>
<keyword id="KW-0325">Glycoprotein</keyword>
<keyword id="KW-0472">Membrane</keyword>
<keyword id="KW-0521">NADP</keyword>
<keyword id="KW-0539">Nucleus</keyword>
<keyword id="KW-0560">Oxidoreductase</keyword>
<keyword id="KW-1185">Reference proteome</keyword>
<keyword id="KW-0812">Transmembrane</keyword>
<keyword id="KW-1133">Transmembrane helix</keyword>
<accession>Q5R5C5</accession>
<accession>Q5RCG3</accession>
<accession>Q5RE61</accession>
<proteinExistence type="evidence at transcript level"/>
<feature type="chain" id="PRO_0000238982" description="NADPH oxidase 4">
    <location>
        <begin position="1"/>
        <end position="578"/>
    </location>
</feature>
<feature type="topological domain" description="Cytoplasmic" evidence="4">
    <location>
        <begin position="1"/>
        <end position="16"/>
    </location>
</feature>
<feature type="transmembrane region" description="Helical" evidence="4">
    <location>
        <begin position="17"/>
        <end position="37"/>
    </location>
</feature>
<feature type="topological domain" description="Extracellular" evidence="4">
    <location>
        <begin position="38"/>
        <end position="62"/>
    </location>
</feature>
<feature type="transmembrane region" description="Helical" evidence="4">
    <location>
        <begin position="63"/>
        <end position="83"/>
    </location>
</feature>
<feature type="topological domain" description="Cytoplasmic" evidence="4">
    <location>
        <begin position="84"/>
        <end position="103"/>
    </location>
</feature>
<feature type="transmembrane region" description="Helical" evidence="4">
    <location>
        <begin position="104"/>
        <end position="124"/>
    </location>
</feature>
<feature type="topological domain" description="Extracellular" evidence="4">
    <location>
        <begin position="125"/>
        <end position="154"/>
    </location>
</feature>
<feature type="transmembrane region" description="Helical" evidence="4">
    <location>
        <begin position="155"/>
        <end position="175"/>
    </location>
</feature>
<feature type="topological domain" description="Cytoplasmic" evidence="4">
    <location>
        <begin position="176"/>
        <end position="188"/>
    </location>
</feature>
<feature type="transmembrane region" description="Helical" evidence="4">
    <location>
        <begin position="189"/>
        <end position="209"/>
    </location>
</feature>
<feature type="topological domain" description="Extracellular" evidence="4">
    <location>
        <begin position="210"/>
        <end position="424"/>
    </location>
</feature>
<feature type="transmembrane region" description="Helical" evidence="4">
    <location>
        <begin position="425"/>
        <end position="445"/>
    </location>
</feature>
<feature type="topological domain" description="Cytoplasmic" evidence="4">
    <location>
        <begin position="446"/>
        <end position="578"/>
    </location>
</feature>
<feature type="domain" description="Ferric oxidoreductase">
    <location>
        <begin position="58"/>
        <end position="303"/>
    </location>
</feature>
<feature type="domain" description="FAD-binding FR-type" evidence="5">
    <location>
        <begin position="304"/>
        <end position="419"/>
    </location>
</feature>
<feature type="region of interest" description="E-loop; essential for H2O2 generating catalytic activity" evidence="3">
    <location>
        <begin position="218"/>
        <end position="273"/>
    </location>
</feature>
<feature type="region of interest" description="Mediates interaction with TLR4" evidence="3">
    <location>
        <begin position="248"/>
        <end position="575"/>
    </location>
</feature>
<feature type="glycosylation site" description="N-linked (GlcNAc...) asparagine" evidence="4">
    <location>
        <position position="133"/>
    </location>
</feature>
<feature type="glycosylation site" description="N-linked (GlcNAc...) asparagine" evidence="4">
    <location>
        <position position="230"/>
    </location>
</feature>
<feature type="splice variant" id="VSP_019065" description="In isoform 2." evidence="6">
    <original>MAVSWRSWLANEGVKHLCL</original>
    <variation>MGEEVWRKREEVIFSEHSFSFYPLNIFAPFVLFPDYFCLLE</variation>
    <location>
        <begin position="1"/>
        <end position="19"/>
    </location>
</feature>
<feature type="sequence conflict" description="In Ref. 1; CAH90544/CAH89946." evidence="7" ref="1">
    <original>H</original>
    <variation>R</variation>
    <location>
        <position position="246"/>
    </location>
</feature>
<feature type="sequence conflict" description="In Ref. 1; CAH93041." evidence="7" ref="1">
    <original>N</original>
    <variation>D</variation>
    <location>
        <position position="306"/>
    </location>
</feature>
<sequence length="578" mass="66921">MAVSWRSWLANEGVKHLCLFIWLSMNVLLFWKTFLLYNQGPEYHYLHQMLGLGLCLSRASASVLNLNCSLILLPMCRTLLAYLRGSQKVPSRRTRRLLDKSRTFHITCGVTICIFSGVHVAAHLVNALNFSVNYSEDFVELNAARYRDEDPRKLLFTTVPGLTGVCMVVVLFLMITASTYAIRVSNYDIFWYTHNLFFVFYMLLTLHVSGGLLKYQTNLDTHPPGCISLNRTSSQNISLPEYFSEHFHEPFPEGFSKPEEFTQNTFVKICMEEPRFQANFPQTWLWISGPLCLYCAERLYRYIRSNKPVTIISVISHPSDVMEIRMVKENFKARPGQYITLHCPSVSALENHPFTLTMCPTETKATFGVHLKIVGDWTERFRDLLLPPSSQDSEILPFIQSRNYPKLYIDGPFGSPFEESLNYEVSLCVAGGIGVTPFASILNTLLDDWKPYKLRRLYFIWVCRDIQSFRWFADLLCMLHNKFWQENRPDYVNIQLYLSQTDGIQKIIGEKYHALNSRLFIGRPRWKLLFDEIAKYNRGKTVGVFCCGPNSLSKTLHKLSNQINSYGTRFEYNKESFS</sequence>
<reference key="1">
    <citation type="submission" date="2004-11" db="EMBL/GenBank/DDBJ databases">
        <authorList>
            <consortium name="The German cDNA consortium"/>
        </authorList>
    </citation>
    <scope>NUCLEOTIDE SEQUENCE [LARGE SCALE MRNA] (ISOFORMS 1 AND 2)</scope>
    <source>
        <tissue>Kidney</tissue>
    </source>
</reference>
<protein>
    <recommendedName>
        <fullName>NADPH oxidase 4</fullName>
        <ecNumber evidence="3">1.6.3.1</ecNumber>
    </recommendedName>
</protein>
<dbReference type="EC" id="1.6.3.1" evidence="3"/>
<dbReference type="EMBL" id="CR857676">
    <property type="protein sequence ID" value="CAH89946.1"/>
    <property type="molecule type" value="mRNA"/>
</dbReference>
<dbReference type="EMBL" id="CR858307">
    <property type="protein sequence ID" value="CAH90544.1"/>
    <property type="molecule type" value="mRNA"/>
</dbReference>
<dbReference type="EMBL" id="CR860937">
    <property type="protein sequence ID" value="CAH93041.1"/>
    <property type="molecule type" value="mRNA"/>
</dbReference>
<dbReference type="RefSeq" id="NP_001124912.2">
    <molecule id="Q5R5C5-2"/>
    <property type="nucleotide sequence ID" value="NM_001131440.2"/>
</dbReference>
<dbReference type="RefSeq" id="NP_001128890.2">
    <molecule id="Q5R5C5-1"/>
    <property type="nucleotide sequence ID" value="NM_001135418.2"/>
</dbReference>
<dbReference type="RefSeq" id="XP_009245205.1">
    <property type="nucleotide sequence ID" value="XM_009246930.1"/>
</dbReference>
<dbReference type="SMR" id="Q5R5C5"/>
<dbReference type="FunCoup" id="Q5R5C5">
    <property type="interactions" value="231"/>
</dbReference>
<dbReference type="STRING" id="9601.ENSPPYP00000004298"/>
<dbReference type="GlyCosmos" id="Q5R5C5">
    <property type="glycosylation" value="2 sites, No reported glycans"/>
</dbReference>
<dbReference type="Ensembl" id="ENSPPYT00000004472.3">
    <molecule id="Q5R5C5-1"/>
    <property type="protein sequence ID" value="ENSPPYP00000004298.2"/>
    <property type="gene ID" value="ENSPPYG00000003756.3"/>
</dbReference>
<dbReference type="Ensembl" id="ENSPPYT00000046242.1">
    <molecule id="Q5R5C5-2"/>
    <property type="protein sequence ID" value="ENSPPYP00000034182.1"/>
    <property type="gene ID" value="ENSPPYG00000003756.3"/>
</dbReference>
<dbReference type="GeneID" id="100171782"/>
<dbReference type="KEGG" id="pon:100171782"/>
<dbReference type="CTD" id="50507"/>
<dbReference type="eggNOG" id="KOG0039">
    <property type="taxonomic scope" value="Eukaryota"/>
</dbReference>
<dbReference type="GeneTree" id="ENSGT00940000159621"/>
<dbReference type="HOGENOM" id="CLU_005646_3_1_1"/>
<dbReference type="InParanoid" id="Q5R5C5"/>
<dbReference type="OMA" id="AFWYTHQ"/>
<dbReference type="OrthoDB" id="167398at2759"/>
<dbReference type="TreeFam" id="TF105354"/>
<dbReference type="Proteomes" id="UP000001595">
    <property type="component" value="Chromosome 11"/>
</dbReference>
<dbReference type="GO" id="GO:0005783">
    <property type="term" value="C:endoplasmic reticulum"/>
    <property type="evidence" value="ECO:0000250"/>
    <property type="project" value="UniProtKB"/>
</dbReference>
<dbReference type="GO" id="GO:0005789">
    <property type="term" value="C:endoplasmic reticulum membrane"/>
    <property type="evidence" value="ECO:0007669"/>
    <property type="project" value="UniProtKB-SubCell"/>
</dbReference>
<dbReference type="GO" id="GO:0005925">
    <property type="term" value="C:focal adhesion"/>
    <property type="evidence" value="ECO:0007669"/>
    <property type="project" value="UniProtKB-SubCell"/>
</dbReference>
<dbReference type="GO" id="GO:0005739">
    <property type="term" value="C:mitochondrion"/>
    <property type="evidence" value="ECO:0007669"/>
    <property type="project" value="Ensembl"/>
</dbReference>
<dbReference type="GO" id="GO:0043020">
    <property type="term" value="C:NADPH oxidase complex"/>
    <property type="evidence" value="ECO:0007669"/>
    <property type="project" value="TreeGrafter"/>
</dbReference>
<dbReference type="GO" id="GO:0005634">
    <property type="term" value="C:nucleus"/>
    <property type="evidence" value="ECO:0007669"/>
    <property type="project" value="UniProtKB-SubCell"/>
</dbReference>
<dbReference type="GO" id="GO:0048471">
    <property type="term" value="C:perinuclear region of cytoplasm"/>
    <property type="evidence" value="ECO:0007669"/>
    <property type="project" value="Ensembl"/>
</dbReference>
<dbReference type="GO" id="GO:0005886">
    <property type="term" value="C:plasma membrane"/>
    <property type="evidence" value="ECO:0000250"/>
    <property type="project" value="UniProtKB"/>
</dbReference>
<dbReference type="GO" id="GO:0020037">
    <property type="term" value="F:heme binding"/>
    <property type="evidence" value="ECO:0000250"/>
    <property type="project" value="UniProtKB"/>
</dbReference>
<dbReference type="GO" id="GO:0072341">
    <property type="term" value="F:modified amino acid binding"/>
    <property type="evidence" value="ECO:0007669"/>
    <property type="project" value="Ensembl"/>
</dbReference>
<dbReference type="GO" id="GO:0016174">
    <property type="term" value="F:NAD(P)H oxidase H2O2-forming activity"/>
    <property type="evidence" value="ECO:0000250"/>
    <property type="project" value="UniProtKB"/>
</dbReference>
<dbReference type="GO" id="GO:0106294">
    <property type="term" value="F:NADPH oxidase H202-forming activity"/>
    <property type="evidence" value="ECO:0007669"/>
    <property type="project" value="RHEA"/>
</dbReference>
<dbReference type="GO" id="GO:1990782">
    <property type="term" value="F:protein tyrosine kinase binding"/>
    <property type="evidence" value="ECO:0007669"/>
    <property type="project" value="Ensembl"/>
</dbReference>
<dbReference type="GO" id="GO:0016175">
    <property type="term" value="F:superoxide-generating NAD(P)H oxidase activity"/>
    <property type="evidence" value="ECO:0000250"/>
    <property type="project" value="UniProtKB"/>
</dbReference>
<dbReference type="GO" id="GO:0106292">
    <property type="term" value="F:superoxide-generating NADPH oxidase activity"/>
    <property type="evidence" value="ECO:0007669"/>
    <property type="project" value="RHEA"/>
</dbReference>
<dbReference type="GO" id="GO:0045453">
    <property type="term" value="P:bone resorption"/>
    <property type="evidence" value="ECO:0007669"/>
    <property type="project" value="Ensembl"/>
</dbReference>
<dbReference type="GO" id="GO:0055007">
    <property type="term" value="P:cardiac muscle cell differentiation"/>
    <property type="evidence" value="ECO:0007669"/>
    <property type="project" value="Ensembl"/>
</dbReference>
<dbReference type="GO" id="GO:0000902">
    <property type="term" value="P:cell morphogenesis"/>
    <property type="evidence" value="ECO:0007669"/>
    <property type="project" value="Ensembl"/>
</dbReference>
<dbReference type="GO" id="GO:0071333">
    <property type="term" value="P:cellular response to glucose stimulus"/>
    <property type="evidence" value="ECO:0007669"/>
    <property type="project" value="Ensembl"/>
</dbReference>
<dbReference type="GO" id="GO:0006952">
    <property type="term" value="P:defense response"/>
    <property type="evidence" value="ECO:0007669"/>
    <property type="project" value="TreeGrafter"/>
</dbReference>
<dbReference type="GO" id="GO:0010467">
    <property type="term" value="P:gene expression"/>
    <property type="evidence" value="ECO:0007669"/>
    <property type="project" value="Ensembl"/>
</dbReference>
<dbReference type="GO" id="GO:0003015">
    <property type="term" value="P:heart process"/>
    <property type="evidence" value="ECO:0007669"/>
    <property type="project" value="Ensembl"/>
</dbReference>
<dbReference type="GO" id="GO:0050667">
    <property type="term" value="P:homocysteine metabolic process"/>
    <property type="evidence" value="ECO:0007669"/>
    <property type="project" value="Ensembl"/>
</dbReference>
<dbReference type="GO" id="GO:0035556">
    <property type="term" value="P:intracellular signal transduction"/>
    <property type="evidence" value="ECO:0007669"/>
    <property type="project" value="Ensembl"/>
</dbReference>
<dbReference type="GO" id="GO:0008285">
    <property type="term" value="P:negative regulation of cell population proliferation"/>
    <property type="evidence" value="ECO:0007669"/>
    <property type="project" value="Ensembl"/>
</dbReference>
<dbReference type="GO" id="GO:2000573">
    <property type="term" value="P:positive regulation of DNA biosynthetic process"/>
    <property type="evidence" value="ECO:0007669"/>
    <property type="project" value="Ensembl"/>
</dbReference>
<dbReference type="GO" id="GO:0070374">
    <property type="term" value="P:positive regulation of ERK1 and ERK2 cascade"/>
    <property type="evidence" value="ECO:0007669"/>
    <property type="project" value="Ensembl"/>
</dbReference>
<dbReference type="GO" id="GO:0051897">
    <property type="term" value="P:positive regulation of phosphatidylinositol 3-kinase/protein kinase B signal transduction"/>
    <property type="evidence" value="ECO:0007669"/>
    <property type="project" value="Ensembl"/>
</dbReference>
<dbReference type="GO" id="GO:0042554">
    <property type="term" value="P:superoxide anion generation"/>
    <property type="evidence" value="ECO:0007669"/>
    <property type="project" value="Ensembl"/>
</dbReference>
<dbReference type="CDD" id="cd06186">
    <property type="entry name" value="NOX_Duox_like_FAD_NADP"/>
    <property type="match status" value="1"/>
</dbReference>
<dbReference type="FunFam" id="2.40.30.10:FF:000183">
    <property type="entry name" value="NADPH oxidase 4"/>
    <property type="match status" value="1"/>
</dbReference>
<dbReference type="FunFam" id="3.40.50.80:FF:000015">
    <property type="entry name" value="NADPH oxidase 4"/>
    <property type="match status" value="1"/>
</dbReference>
<dbReference type="Gene3D" id="3.40.50.80">
    <property type="entry name" value="Nucleotide-binding domain of ferredoxin-NADP reductase (FNR) module"/>
    <property type="match status" value="1"/>
</dbReference>
<dbReference type="Gene3D" id="2.40.30.10">
    <property type="entry name" value="Translation factors"/>
    <property type="match status" value="1"/>
</dbReference>
<dbReference type="InterPro" id="IPR000778">
    <property type="entry name" value="Cyt_b245_heavy_chain"/>
</dbReference>
<dbReference type="InterPro" id="IPR013112">
    <property type="entry name" value="FAD-bd_8"/>
</dbReference>
<dbReference type="InterPro" id="IPR017927">
    <property type="entry name" value="FAD-bd_FR_type"/>
</dbReference>
<dbReference type="InterPro" id="IPR013130">
    <property type="entry name" value="Fe3_Rdtase_TM_dom"/>
</dbReference>
<dbReference type="InterPro" id="IPR013121">
    <property type="entry name" value="Fe_red_NAD-bd_6"/>
</dbReference>
<dbReference type="InterPro" id="IPR039261">
    <property type="entry name" value="FNR_nucleotide-bd"/>
</dbReference>
<dbReference type="InterPro" id="IPR050369">
    <property type="entry name" value="RBOH/FRE"/>
</dbReference>
<dbReference type="InterPro" id="IPR017938">
    <property type="entry name" value="Riboflavin_synthase-like_b-brl"/>
</dbReference>
<dbReference type="PANTHER" id="PTHR11972">
    <property type="entry name" value="NADPH OXIDASE"/>
    <property type="match status" value="1"/>
</dbReference>
<dbReference type="PANTHER" id="PTHR11972:SF206">
    <property type="entry name" value="NADPH OXIDASE 4"/>
    <property type="match status" value="1"/>
</dbReference>
<dbReference type="Pfam" id="PF08022">
    <property type="entry name" value="FAD_binding_8"/>
    <property type="match status" value="1"/>
</dbReference>
<dbReference type="Pfam" id="PF01794">
    <property type="entry name" value="Ferric_reduct"/>
    <property type="match status" value="1"/>
</dbReference>
<dbReference type="Pfam" id="PF08030">
    <property type="entry name" value="NAD_binding_6"/>
    <property type="match status" value="1"/>
</dbReference>
<dbReference type="PRINTS" id="PR00466">
    <property type="entry name" value="GP91PHOX"/>
</dbReference>
<dbReference type="SUPFAM" id="SSF52343">
    <property type="entry name" value="Ferredoxin reductase-like, C-terminal NADP-linked domain"/>
    <property type="match status" value="1"/>
</dbReference>
<dbReference type="SUPFAM" id="SSF63380">
    <property type="entry name" value="Riboflavin synthase domain-like"/>
    <property type="match status" value="1"/>
</dbReference>
<dbReference type="PROSITE" id="PS51384">
    <property type="entry name" value="FAD_FR"/>
    <property type="match status" value="1"/>
</dbReference>
<gene>
    <name type="primary">NOX4</name>
</gene>
<evidence type="ECO:0000250" key="1">
    <source>
        <dbReference type="UniProtKB" id="Q924V1"/>
    </source>
</evidence>
<evidence type="ECO:0000250" key="2">
    <source>
        <dbReference type="UniProtKB" id="Q9JHI8"/>
    </source>
</evidence>
<evidence type="ECO:0000250" key="3">
    <source>
        <dbReference type="UniProtKB" id="Q9NPH5"/>
    </source>
</evidence>
<evidence type="ECO:0000255" key="4"/>
<evidence type="ECO:0000255" key="5">
    <source>
        <dbReference type="PROSITE-ProRule" id="PRU00716"/>
    </source>
</evidence>
<evidence type="ECO:0000303" key="6">
    <source ref="1"/>
</evidence>
<evidence type="ECO:0000305" key="7"/>
<name>NOX4_PONAB</name>
<comment type="function">
    <text evidence="3">NADPH oxidase that catalyzes predominantly the reduction of oxygen to H2O2 (By similarity). Can also catalyze to a smaller extent, the reduction of oxygen to superoxide (By similarity). May function as an oxygen sensor regulating the KCNK3/TASK-1 potassium channel and HIF1A activity (By similarity). May regulate insulin signaling cascade (By similarity). May play a role in apoptosis, bone resorption and lipolysaccharide-mediated activation of NFKB (By similarity). May produce superoxide in the nucleus and play a role in regulating gene expression upon cell stimulation (By similarity). Promotes ferroptosis, reactive oxygen species production and reduced glutathione (GSH) levels by activating NLRP3 inflammasome activation and cytokine release (By similarity).</text>
</comment>
<comment type="catalytic activity">
    <reaction evidence="3">
        <text>NADPH + 2 O2 = 2 superoxide + NADP(+) + H(+)</text>
        <dbReference type="Rhea" id="RHEA:63180"/>
        <dbReference type="ChEBI" id="CHEBI:15378"/>
        <dbReference type="ChEBI" id="CHEBI:15379"/>
        <dbReference type="ChEBI" id="CHEBI:18421"/>
        <dbReference type="ChEBI" id="CHEBI:57783"/>
        <dbReference type="ChEBI" id="CHEBI:58349"/>
    </reaction>
</comment>
<comment type="catalytic activity">
    <reaction evidence="3">
        <text>NADPH + O2 + H(+) = H2O2 + NADP(+)</text>
        <dbReference type="Rhea" id="RHEA:11260"/>
        <dbReference type="ChEBI" id="CHEBI:15378"/>
        <dbReference type="ChEBI" id="CHEBI:15379"/>
        <dbReference type="ChEBI" id="CHEBI:16240"/>
        <dbReference type="ChEBI" id="CHEBI:57783"/>
        <dbReference type="ChEBI" id="CHEBI:58349"/>
        <dbReference type="EC" id="1.6.3.1"/>
    </reaction>
</comment>
<comment type="cofactor">
    <cofactor evidence="3">
        <name>heme</name>
        <dbReference type="ChEBI" id="CHEBI:30413"/>
    </cofactor>
</comment>
<comment type="activity regulation">
    <text evidence="2 3">Activated by insulin. Inhibited by diphenylene iodonium. Inhibited by plumbagin. Activated by phorbol 12-myristate 13-acetate (PMA) (By similarity).</text>
</comment>
<comment type="subunit">
    <text evidence="1 3">Interacts with, relocalizes and stabilizes CYBA/p22phox. Interacts with TLR4. Interacts with protein disulfide isomerase (By similarity). Interacts with PPP1R15A (By similarity). Interacts with LRRC8A; this interaction prevents the ubiquitin-mediated degradation of LRRC8A (By similarity).</text>
</comment>
<comment type="subcellular location">
    <subcellularLocation>
        <location evidence="3">Cytoplasm</location>
    </subcellularLocation>
    <subcellularLocation>
        <location evidence="3">Endoplasmic reticulum membrane</location>
        <topology evidence="4">Multi-pass membrane protein</topology>
    </subcellularLocation>
    <subcellularLocation>
        <location evidence="3">Cell membrane</location>
        <topology evidence="4">Multi-pass membrane protein</topology>
    </subcellularLocation>
    <subcellularLocation>
        <location evidence="1">Cell junction</location>
        <location evidence="1">Focal adhesion</location>
    </subcellularLocation>
    <subcellularLocation>
        <location evidence="3">Nucleus</location>
    </subcellularLocation>
</comment>
<comment type="alternative products">
    <event type="alternative splicing"/>
    <isoform>
        <id>Q5R5C5-1</id>
        <name>1</name>
        <sequence type="displayed"/>
    </isoform>
    <isoform>
        <id>Q5R5C5-2</id>
        <name>2</name>
        <sequence type="described" ref="VSP_019065"/>
    </isoform>
</comment>
<comment type="PTM">
    <text evidence="3">N-glycosylation is required for the function.</text>
</comment>